<name>RS11_LEPBJ</name>
<keyword id="KW-0687">Ribonucleoprotein</keyword>
<keyword id="KW-0689">Ribosomal protein</keyword>
<keyword id="KW-0694">RNA-binding</keyword>
<keyword id="KW-0699">rRNA-binding</keyword>
<sequence length="136" mass="14702">MADDKKSVKKEKKVKKKEKKIVPRGKVYITASFNNTIVTITDMAGNTISWSTSGAMGFRGSKKSTPYAAQIAAGNAAEKAMDSAGLQEVDVMVSGPGIGRESAIRSLVARGLNIKMIKDVTPLPHNGCRPRKRRRV</sequence>
<protein>
    <recommendedName>
        <fullName evidence="1">Small ribosomal subunit protein uS11</fullName>
    </recommendedName>
    <alternativeName>
        <fullName evidence="2">30S ribosomal protein S11</fullName>
    </alternativeName>
</protein>
<comment type="function">
    <text evidence="1">Located on the platform of the 30S subunit, it bridges several disparate RNA helices of the 16S rRNA. Forms part of the Shine-Dalgarno cleft in the 70S ribosome.</text>
</comment>
<comment type="subunit">
    <text evidence="1">Part of the 30S ribosomal subunit. Interacts with proteins S7 and S18. Binds to IF-3.</text>
</comment>
<comment type="similarity">
    <text evidence="1">Belongs to the universal ribosomal protein uS11 family.</text>
</comment>
<reference key="1">
    <citation type="journal article" date="2006" name="Proc. Natl. Acad. Sci. U.S.A.">
        <title>Genome reduction in Leptospira borgpetersenii reflects limited transmission potential.</title>
        <authorList>
            <person name="Bulach D.M."/>
            <person name="Zuerner R.L."/>
            <person name="Wilson P."/>
            <person name="Seemann T."/>
            <person name="McGrath A."/>
            <person name="Cullen P.A."/>
            <person name="Davis J."/>
            <person name="Johnson M."/>
            <person name="Kuczek E."/>
            <person name="Alt D.P."/>
            <person name="Peterson-Burch B."/>
            <person name="Coppel R.L."/>
            <person name="Rood J.I."/>
            <person name="Davies J.K."/>
            <person name="Adler B."/>
        </authorList>
    </citation>
    <scope>NUCLEOTIDE SEQUENCE [LARGE SCALE GENOMIC DNA]</scope>
    <source>
        <strain>JB197</strain>
    </source>
</reference>
<proteinExistence type="inferred from homology"/>
<accession>Q04PW3</accession>
<feature type="chain" id="PRO_0000294782" description="Small ribosomal subunit protein uS11">
    <location>
        <begin position="1"/>
        <end position="136"/>
    </location>
</feature>
<dbReference type="EMBL" id="CP000350">
    <property type="protein sequence ID" value="ABJ77057.1"/>
    <property type="molecule type" value="Genomic_DNA"/>
</dbReference>
<dbReference type="RefSeq" id="WP_000752686.1">
    <property type="nucleotide sequence ID" value="NC_008510.1"/>
</dbReference>
<dbReference type="SMR" id="Q04PW3"/>
<dbReference type="GeneID" id="61172975"/>
<dbReference type="KEGG" id="lbj:LBJ_2634"/>
<dbReference type="HOGENOM" id="CLU_072439_5_0_12"/>
<dbReference type="Proteomes" id="UP000000656">
    <property type="component" value="Chromosome 1"/>
</dbReference>
<dbReference type="GO" id="GO:1990904">
    <property type="term" value="C:ribonucleoprotein complex"/>
    <property type="evidence" value="ECO:0007669"/>
    <property type="project" value="UniProtKB-KW"/>
</dbReference>
<dbReference type="GO" id="GO:0005840">
    <property type="term" value="C:ribosome"/>
    <property type="evidence" value="ECO:0007669"/>
    <property type="project" value="UniProtKB-KW"/>
</dbReference>
<dbReference type="GO" id="GO:0019843">
    <property type="term" value="F:rRNA binding"/>
    <property type="evidence" value="ECO:0007669"/>
    <property type="project" value="UniProtKB-UniRule"/>
</dbReference>
<dbReference type="GO" id="GO:0003735">
    <property type="term" value="F:structural constituent of ribosome"/>
    <property type="evidence" value="ECO:0007669"/>
    <property type="project" value="InterPro"/>
</dbReference>
<dbReference type="GO" id="GO:0006412">
    <property type="term" value="P:translation"/>
    <property type="evidence" value="ECO:0007669"/>
    <property type="project" value="UniProtKB-UniRule"/>
</dbReference>
<dbReference type="FunFam" id="3.30.420.80:FF:000012">
    <property type="entry name" value="30S ribosomal protein S11"/>
    <property type="match status" value="1"/>
</dbReference>
<dbReference type="Gene3D" id="3.30.420.80">
    <property type="entry name" value="Ribosomal protein S11"/>
    <property type="match status" value="1"/>
</dbReference>
<dbReference type="HAMAP" id="MF_01310">
    <property type="entry name" value="Ribosomal_uS11"/>
    <property type="match status" value="1"/>
</dbReference>
<dbReference type="InterPro" id="IPR001971">
    <property type="entry name" value="Ribosomal_uS11"/>
</dbReference>
<dbReference type="InterPro" id="IPR019981">
    <property type="entry name" value="Ribosomal_uS11_bac-type"/>
</dbReference>
<dbReference type="InterPro" id="IPR018102">
    <property type="entry name" value="Ribosomal_uS11_CS"/>
</dbReference>
<dbReference type="InterPro" id="IPR036967">
    <property type="entry name" value="Ribosomal_uS11_sf"/>
</dbReference>
<dbReference type="NCBIfam" id="NF003698">
    <property type="entry name" value="PRK05309.1"/>
    <property type="match status" value="1"/>
</dbReference>
<dbReference type="NCBIfam" id="TIGR03632">
    <property type="entry name" value="uS11_bact"/>
    <property type="match status" value="1"/>
</dbReference>
<dbReference type="PANTHER" id="PTHR11759">
    <property type="entry name" value="40S RIBOSOMAL PROTEIN S14/30S RIBOSOMAL PROTEIN S11"/>
    <property type="match status" value="1"/>
</dbReference>
<dbReference type="Pfam" id="PF00411">
    <property type="entry name" value="Ribosomal_S11"/>
    <property type="match status" value="1"/>
</dbReference>
<dbReference type="PIRSF" id="PIRSF002131">
    <property type="entry name" value="Ribosomal_S11"/>
    <property type="match status" value="1"/>
</dbReference>
<dbReference type="SUPFAM" id="SSF53137">
    <property type="entry name" value="Translational machinery components"/>
    <property type="match status" value="1"/>
</dbReference>
<dbReference type="PROSITE" id="PS00054">
    <property type="entry name" value="RIBOSOMAL_S11"/>
    <property type="match status" value="1"/>
</dbReference>
<evidence type="ECO:0000255" key="1">
    <source>
        <dbReference type="HAMAP-Rule" id="MF_01310"/>
    </source>
</evidence>
<evidence type="ECO:0000305" key="2"/>
<gene>
    <name evidence="1" type="primary">rpsK</name>
    <name type="ordered locus">LBJ_2634</name>
</gene>
<organism>
    <name type="scientific">Leptospira borgpetersenii serovar Hardjo-bovis (strain JB197)</name>
    <dbReference type="NCBI Taxonomy" id="355277"/>
    <lineage>
        <taxon>Bacteria</taxon>
        <taxon>Pseudomonadati</taxon>
        <taxon>Spirochaetota</taxon>
        <taxon>Spirochaetia</taxon>
        <taxon>Leptospirales</taxon>
        <taxon>Leptospiraceae</taxon>
        <taxon>Leptospira</taxon>
    </lineage>
</organism>